<sequence length="387" mass="42412">MASVGIVTPQSLRLNAPLPLRSGAVLDDCTLVYETYGTLNATRSNAVLVCHALNASHHVAGRYEGQDKSEGWWDNLIGPGKPLDTDRFFVIGVNNPGSCFGSTGPASTDPKTGRPYGADFPVVTVEDWVDAQARLLDALGIEQLAAVIGGSLGGMQAMSWTVRYPQRVRHAIVVASAPNLSAQNIAFNEVARRAIVTDPDFHGGHFYAHGVVPKRGLRVARMVGHITYLSDDVMASKFGRQTLNPELAYSTQDIEFQIESYLRYQGDKFSDYFDANTYLLITRALDYFDPAREFDGDLSRALAGATAKFLVVSFTTDWRFSPERSREIVKALVDNRRDVSYAEIDAPHGHDAFLMTDARYHNVLRAYFARIADEAVAPAGGIKGFAV</sequence>
<reference key="1">
    <citation type="journal article" date="2007" name="J. Bacteriol.">
        <title>Whole-genome analysis of the methyl tert-butyl ether-degrading beta-proteobacterium Methylibium petroleiphilum PM1.</title>
        <authorList>
            <person name="Kane S.R."/>
            <person name="Chakicherla A.Y."/>
            <person name="Chain P.S.G."/>
            <person name="Schmidt R."/>
            <person name="Shin M.W."/>
            <person name="Legler T.C."/>
            <person name="Scow K.M."/>
            <person name="Larimer F.W."/>
            <person name="Lucas S.M."/>
            <person name="Richardson P.M."/>
            <person name="Hristova K.R."/>
        </authorList>
    </citation>
    <scope>NUCLEOTIDE SEQUENCE [LARGE SCALE GENOMIC DNA]</scope>
    <source>
        <strain>ATCC BAA-1232 / LMG 22953 / PM1</strain>
    </source>
</reference>
<keyword id="KW-0012">Acyltransferase</keyword>
<keyword id="KW-0028">Amino-acid biosynthesis</keyword>
<keyword id="KW-0963">Cytoplasm</keyword>
<keyword id="KW-0486">Methionine biosynthesis</keyword>
<keyword id="KW-1185">Reference proteome</keyword>
<keyword id="KW-0808">Transferase</keyword>
<feature type="chain" id="PRO_1000078945" description="Homoserine O-succinyltransferase">
    <location>
        <begin position="1"/>
        <end position="387"/>
    </location>
</feature>
<feature type="domain" description="AB hydrolase-1" evidence="1">
    <location>
        <begin position="45"/>
        <end position="354"/>
    </location>
</feature>
<feature type="active site" description="Nucleophile" evidence="1">
    <location>
        <position position="151"/>
    </location>
</feature>
<feature type="active site" evidence="1">
    <location>
        <position position="317"/>
    </location>
</feature>
<feature type="active site" evidence="1">
    <location>
        <position position="350"/>
    </location>
</feature>
<feature type="binding site" evidence="1">
    <location>
        <position position="221"/>
    </location>
    <ligand>
        <name>substrate</name>
    </ligand>
</feature>
<feature type="binding site" evidence="1">
    <location>
        <position position="351"/>
    </location>
    <ligand>
        <name>substrate</name>
    </ligand>
</feature>
<feature type="site" description="Important for acyl-CoA specificity" evidence="1">
    <location>
        <position position="319"/>
    </location>
</feature>
<protein>
    <recommendedName>
        <fullName evidence="1">Homoserine O-succinyltransferase</fullName>
        <shortName evidence="1">HST</shortName>
        <ecNumber evidence="1">2.3.1.46</ecNumber>
    </recommendedName>
    <alternativeName>
        <fullName evidence="1">Homoserine transsuccinylase</fullName>
        <shortName evidence="1">HTS</shortName>
    </alternativeName>
</protein>
<gene>
    <name evidence="1" type="primary">metXS</name>
    <name type="ordered locus">Mpe_A3584</name>
</gene>
<evidence type="ECO:0000255" key="1">
    <source>
        <dbReference type="HAMAP-Rule" id="MF_00296"/>
    </source>
</evidence>
<organism>
    <name type="scientific">Methylibium petroleiphilum (strain ATCC BAA-1232 / LMG 22953 / PM1)</name>
    <dbReference type="NCBI Taxonomy" id="420662"/>
    <lineage>
        <taxon>Bacteria</taxon>
        <taxon>Pseudomonadati</taxon>
        <taxon>Pseudomonadota</taxon>
        <taxon>Betaproteobacteria</taxon>
        <taxon>Burkholderiales</taxon>
        <taxon>Sphaerotilaceae</taxon>
        <taxon>Methylibium</taxon>
    </lineage>
</organism>
<name>METXS_METPP</name>
<comment type="function">
    <text evidence="1">Transfers a succinyl group from succinyl-CoA to L-homoserine, forming succinyl-L-homoserine.</text>
</comment>
<comment type="catalytic activity">
    <reaction evidence="1">
        <text>L-homoserine + succinyl-CoA = O-succinyl-L-homoserine + CoA</text>
        <dbReference type="Rhea" id="RHEA:22008"/>
        <dbReference type="ChEBI" id="CHEBI:57287"/>
        <dbReference type="ChEBI" id="CHEBI:57292"/>
        <dbReference type="ChEBI" id="CHEBI:57476"/>
        <dbReference type="ChEBI" id="CHEBI:57661"/>
        <dbReference type="EC" id="2.3.1.46"/>
    </reaction>
</comment>
<comment type="pathway">
    <text evidence="1">Amino-acid biosynthesis; L-methionine biosynthesis via de novo pathway; O-succinyl-L-homoserine from L-homoserine: step 1/1.</text>
</comment>
<comment type="subunit">
    <text evidence="1">Homodimer.</text>
</comment>
<comment type="subcellular location">
    <subcellularLocation>
        <location evidence="1">Cytoplasm</location>
    </subcellularLocation>
</comment>
<comment type="similarity">
    <text evidence="1">Belongs to the AB hydrolase superfamily. MetX family.</text>
</comment>
<dbReference type="EC" id="2.3.1.46" evidence="1"/>
<dbReference type="EMBL" id="CP000555">
    <property type="protein sequence ID" value="ABM96537.1"/>
    <property type="molecule type" value="Genomic_DNA"/>
</dbReference>
<dbReference type="RefSeq" id="WP_011831157.1">
    <property type="nucleotide sequence ID" value="NC_008825.1"/>
</dbReference>
<dbReference type="SMR" id="A2SLU8"/>
<dbReference type="STRING" id="420662.Mpe_A3584"/>
<dbReference type="ESTHER" id="metpp-metx">
    <property type="family name" value="Homoserine_transacetylase"/>
</dbReference>
<dbReference type="KEGG" id="mpt:Mpe_A3584"/>
<dbReference type="eggNOG" id="COG2021">
    <property type="taxonomic scope" value="Bacteria"/>
</dbReference>
<dbReference type="HOGENOM" id="CLU_028760_1_2_4"/>
<dbReference type="UniPathway" id="UPA00051">
    <property type="reaction ID" value="UER00075"/>
</dbReference>
<dbReference type="Proteomes" id="UP000000366">
    <property type="component" value="Chromosome"/>
</dbReference>
<dbReference type="GO" id="GO:0005737">
    <property type="term" value="C:cytoplasm"/>
    <property type="evidence" value="ECO:0007669"/>
    <property type="project" value="UniProtKB-SubCell"/>
</dbReference>
<dbReference type="GO" id="GO:0004414">
    <property type="term" value="F:homoserine O-acetyltransferase activity"/>
    <property type="evidence" value="ECO:0007669"/>
    <property type="project" value="TreeGrafter"/>
</dbReference>
<dbReference type="GO" id="GO:0008899">
    <property type="term" value="F:homoserine O-succinyltransferase activity"/>
    <property type="evidence" value="ECO:0007669"/>
    <property type="project" value="UniProtKB-UniRule"/>
</dbReference>
<dbReference type="GO" id="GO:0009092">
    <property type="term" value="P:homoserine metabolic process"/>
    <property type="evidence" value="ECO:0007669"/>
    <property type="project" value="TreeGrafter"/>
</dbReference>
<dbReference type="GO" id="GO:0009086">
    <property type="term" value="P:methionine biosynthetic process"/>
    <property type="evidence" value="ECO:0007669"/>
    <property type="project" value="UniProtKB-UniRule"/>
</dbReference>
<dbReference type="FunFam" id="1.10.1740.110:FF:000001">
    <property type="entry name" value="Homoserine O-acetyltransferase"/>
    <property type="match status" value="1"/>
</dbReference>
<dbReference type="Gene3D" id="1.10.1740.110">
    <property type="match status" value="1"/>
</dbReference>
<dbReference type="Gene3D" id="3.40.50.1820">
    <property type="entry name" value="alpha/beta hydrolase"/>
    <property type="match status" value="1"/>
</dbReference>
<dbReference type="HAMAP" id="MF_00296">
    <property type="entry name" value="MetX_acyltransf"/>
    <property type="match status" value="1"/>
</dbReference>
<dbReference type="InterPro" id="IPR000073">
    <property type="entry name" value="AB_hydrolase_1"/>
</dbReference>
<dbReference type="InterPro" id="IPR029058">
    <property type="entry name" value="AB_hydrolase_fold"/>
</dbReference>
<dbReference type="InterPro" id="IPR008220">
    <property type="entry name" value="HAT_MetX-like"/>
</dbReference>
<dbReference type="NCBIfam" id="TIGR01392">
    <property type="entry name" value="homoserO_Ac_trn"/>
    <property type="match status" value="1"/>
</dbReference>
<dbReference type="NCBIfam" id="NF001209">
    <property type="entry name" value="PRK00175.1"/>
    <property type="match status" value="1"/>
</dbReference>
<dbReference type="PANTHER" id="PTHR32268">
    <property type="entry name" value="HOMOSERINE O-ACETYLTRANSFERASE"/>
    <property type="match status" value="1"/>
</dbReference>
<dbReference type="PANTHER" id="PTHR32268:SF11">
    <property type="entry name" value="HOMOSERINE O-ACETYLTRANSFERASE"/>
    <property type="match status" value="1"/>
</dbReference>
<dbReference type="Pfam" id="PF00561">
    <property type="entry name" value="Abhydrolase_1"/>
    <property type="match status" value="1"/>
</dbReference>
<dbReference type="PIRSF" id="PIRSF000443">
    <property type="entry name" value="Homoser_Ac_trans"/>
    <property type="match status" value="1"/>
</dbReference>
<dbReference type="SUPFAM" id="SSF53474">
    <property type="entry name" value="alpha/beta-Hydrolases"/>
    <property type="match status" value="1"/>
</dbReference>
<proteinExistence type="inferred from homology"/>
<accession>A2SLU8</accession>